<sequence>MSDFLLNPFSEIAEVSVGQHFYWQLGSYEVHGQVLLVSWFVLAVIFGLSFVGNSNLKSTPDGLQNFTEFVTEFIRDLAKTQIGEEEYLKWVPYLGTVFLFIFVSNWSGALLPWALIELPNGELAAPTNDINTTVALALLTSISYFYAGIRKKGLRYFNRYVQPAAFLLPINVLEDFTKPLSLSFRLFGNILADELVVGVLVSLVPLIIPIPIMLLGCFTSAIQALVFATLAGAYIGEAVEDHH</sequence>
<evidence type="ECO:0000255" key="1">
    <source>
        <dbReference type="HAMAP-Rule" id="MF_01393"/>
    </source>
</evidence>
<gene>
    <name evidence="1" type="primary">atpI</name>
</gene>
<accession>Q1KVW8</accession>
<proteinExistence type="inferred from homology"/>
<keyword id="KW-0066">ATP synthesis</keyword>
<keyword id="KW-0138">CF(0)</keyword>
<keyword id="KW-0150">Chloroplast</keyword>
<keyword id="KW-0375">Hydrogen ion transport</keyword>
<keyword id="KW-0406">Ion transport</keyword>
<keyword id="KW-0472">Membrane</keyword>
<keyword id="KW-0934">Plastid</keyword>
<keyword id="KW-0793">Thylakoid</keyword>
<keyword id="KW-0812">Transmembrane</keyword>
<keyword id="KW-1133">Transmembrane helix</keyword>
<keyword id="KW-0813">Transport</keyword>
<comment type="function">
    <text evidence="1">Key component of the proton channel; it plays a direct role in the translocation of protons across the membrane.</text>
</comment>
<comment type="subunit">
    <text evidence="1">F-type ATPases have 2 components, CF(1) - the catalytic core - and CF(0) - the membrane proton channel. CF(1) has five subunits: alpha(3), beta(3), gamma(1), delta(1), epsilon(1). CF(0) has four main subunits: a, b, b' and c.</text>
</comment>
<comment type="subcellular location">
    <subcellularLocation>
        <location evidence="1">Plastid</location>
        <location evidence="1">Chloroplast thylakoid membrane</location>
        <topology evidence="1">Multi-pass membrane protein</topology>
    </subcellularLocation>
</comment>
<comment type="similarity">
    <text evidence="1">Belongs to the ATPase A chain family.</text>
</comment>
<dbReference type="EMBL" id="DQ396875">
    <property type="protein sequence ID" value="ABD48238.1"/>
    <property type="molecule type" value="Genomic_DNA"/>
</dbReference>
<dbReference type="RefSeq" id="YP_635956.2">
    <property type="nucleotide sequence ID" value="NC_008101.1"/>
</dbReference>
<dbReference type="SMR" id="Q1KVW8"/>
<dbReference type="GeneID" id="4099823"/>
<dbReference type="GO" id="GO:0009535">
    <property type="term" value="C:chloroplast thylakoid membrane"/>
    <property type="evidence" value="ECO:0007669"/>
    <property type="project" value="UniProtKB-SubCell"/>
</dbReference>
<dbReference type="GO" id="GO:0005886">
    <property type="term" value="C:plasma membrane"/>
    <property type="evidence" value="ECO:0007669"/>
    <property type="project" value="UniProtKB-UniRule"/>
</dbReference>
<dbReference type="GO" id="GO:0045259">
    <property type="term" value="C:proton-transporting ATP synthase complex"/>
    <property type="evidence" value="ECO:0007669"/>
    <property type="project" value="UniProtKB-KW"/>
</dbReference>
<dbReference type="GO" id="GO:0046933">
    <property type="term" value="F:proton-transporting ATP synthase activity, rotational mechanism"/>
    <property type="evidence" value="ECO:0007669"/>
    <property type="project" value="UniProtKB-UniRule"/>
</dbReference>
<dbReference type="CDD" id="cd00310">
    <property type="entry name" value="ATP-synt_Fo_a_6"/>
    <property type="match status" value="1"/>
</dbReference>
<dbReference type="FunFam" id="1.20.120.220:FF:000001">
    <property type="entry name" value="ATP synthase subunit a, chloroplastic"/>
    <property type="match status" value="1"/>
</dbReference>
<dbReference type="Gene3D" id="1.20.120.220">
    <property type="entry name" value="ATP synthase, F0 complex, subunit A"/>
    <property type="match status" value="1"/>
</dbReference>
<dbReference type="HAMAP" id="MF_01393">
    <property type="entry name" value="ATP_synth_a_bact"/>
    <property type="match status" value="1"/>
</dbReference>
<dbReference type="InterPro" id="IPR045082">
    <property type="entry name" value="ATP_syn_F0_a_bact/chloroplast"/>
</dbReference>
<dbReference type="InterPro" id="IPR000568">
    <property type="entry name" value="ATP_synth_F0_asu"/>
</dbReference>
<dbReference type="InterPro" id="IPR023011">
    <property type="entry name" value="ATP_synth_F0_asu_AS"/>
</dbReference>
<dbReference type="InterPro" id="IPR035908">
    <property type="entry name" value="F0_ATP_A_sf"/>
</dbReference>
<dbReference type="NCBIfam" id="TIGR01131">
    <property type="entry name" value="ATP_synt_6_or_A"/>
    <property type="match status" value="1"/>
</dbReference>
<dbReference type="PANTHER" id="PTHR42823">
    <property type="entry name" value="ATP SYNTHASE SUBUNIT A, CHLOROPLASTIC"/>
    <property type="match status" value="1"/>
</dbReference>
<dbReference type="PANTHER" id="PTHR42823:SF3">
    <property type="entry name" value="ATP SYNTHASE SUBUNIT A, CHLOROPLASTIC"/>
    <property type="match status" value="1"/>
</dbReference>
<dbReference type="Pfam" id="PF00119">
    <property type="entry name" value="ATP-synt_A"/>
    <property type="match status" value="1"/>
</dbReference>
<dbReference type="PRINTS" id="PR00123">
    <property type="entry name" value="ATPASEA"/>
</dbReference>
<dbReference type="SUPFAM" id="SSF81336">
    <property type="entry name" value="F1F0 ATP synthase subunit A"/>
    <property type="match status" value="1"/>
</dbReference>
<dbReference type="PROSITE" id="PS00449">
    <property type="entry name" value="ATPASE_A"/>
    <property type="match status" value="1"/>
</dbReference>
<name>ATPI_TETOB</name>
<feature type="chain" id="PRO_0000362598" description="ATP synthase subunit a, chloroplastic">
    <location>
        <begin position="1"/>
        <end position="243"/>
    </location>
</feature>
<feature type="transmembrane region" description="Helical" evidence="1">
    <location>
        <begin position="32"/>
        <end position="52"/>
    </location>
</feature>
<feature type="transmembrane region" description="Helical" evidence="1">
    <location>
        <begin position="96"/>
        <end position="116"/>
    </location>
</feature>
<feature type="transmembrane region" description="Helical" evidence="1">
    <location>
        <begin position="129"/>
        <end position="149"/>
    </location>
</feature>
<feature type="transmembrane region" description="Helical" evidence="1">
    <location>
        <begin position="195"/>
        <end position="215"/>
    </location>
</feature>
<feature type="transmembrane region" description="Helical" evidence="1">
    <location>
        <begin position="216"/>
        <end position="236"/>
    </location>
</feature>
<geneLocation type="chloroplast"/>
<protein>
    <recommendedName>
        <fullName evidence="1">ATP synthase subunit a, chloroplastic</fullName>
    </recommendedName>
    <alternativeName>
        <fullName evidence="1">ATP synthase F0 sector subunit a</fullName>
    </alternativeName>
    <alternativeName>
        <fullName evidence="1">F-ATPase subunit IV</fullName>
    </alternativeName>
</protein>
<reference key="1">
    <citation type="journal article" date="2006" name="BMC Evol. Biol.">
        <title>The complete chloroplast genome sequence of the chlorophycean green alga Scenedesmus obliquus reveals a compact gene organization and a biased distribution of genes on the two DNA strands.</title>
        <authorList>
            <person name="de Cambiaire J.-C."/>
            <person name="Otis C."/>
            <person name="Lemieux C."/>
            <person name="Turmel M."/>
        </authorList>
    </citation>
    <scope>NUCLEOTIDE SEQUENCE [LARGE SCALE GENOMIC DNA]</scope>
    <source>
        <strain>UTEX 393</strain>
    </source>
</reference>
<organism>
    <name type="scientific">Tetradesmus obliquus</name>
    <name type="common">Green alga</name>
    <name type="synonym">Acutodesmus obliquus</name>
    <dbReference type="NCBI Taxonomy" id="3088"/>
    <lineage>
        <taxon>Eukaryota</taxon>
        <taxon>Viridiplantae</taxon>
        <taxon>Chlorophyta</taxon>
        <taxon>core chlorophytes</taxon>
        <taxon>Chlorophyceae</taxon>
        <taxon>CS clade</taxon>
        <taxon>Sphaeropleales</taxon>
        <taxon>Scenedesmaceae</taxon>
        <taxon>Tetradesmus</taxon>
    </lineage>
</organism>